<reference key="1">
    <citation type="journal article" date="2003" name="Nature">
        <title>The genome sequence of Bacillus anthracis Ames and comparison to closely related bacteria.</title>
        <authorList>
            <person name="Read T.D."/>
            <person name="Peterson S.N."/>
            <person name="Tourasse N.J."/>
            <person name="Baillie L.W."/>
            <person name="Paulsen I.T."/>
            <person name="Nelson K.E."/>
            <person name="Tettelin H."/>
            <person name="Fouts D.E."/>
            <person name="Eisen J.A."/>
            <person name="Gill S.R."/>
            <person name="Holtzapple E.K."/>
            <person name="Okstad O.A."/>
            <person name="Helgason E."/>
            <person name="Rilstone J."/>
            <person name="Wu M."/>
            <person name="Kolonay J.F."/>
            <person name="Beanan M.J."/>
            <person name="Dodson R.J."/>
            <person name="Brinkac L.M."/>
            <person name="Gwinn M.L."/>
            <person name="DeBoy R.T."/>
            <person name="Madpu R."/>
            <person name="Daugherty S.C."/>
            <person name="Durkin A.S."/>
            <person name="Haft D.H."/>
            <person name="Nelson W.C."/>
            <person name="Peterson J.D."/>
            <person name="Pop M."/>
            <person name="Khouri H.M."/>
            <person name="Radune D."/>
            <person name="Benton J.L."/>
            <person name="Mahamoud Y."/>
            <person name="Jiang L."/>
            <person name="Hance I.R."/>
            <person name="Weidman J.F."/>
            <person name="Berry K.J."/>
            <person name="Plaut R.D."/>
            <person name="Wolf A.M."/>
            <person name="Watkins K.L."/>
            <person name="Nierman W.C."/>
            <person name="Hazen A."/>
            <person name="Cline R.T."/>
            <person name="Redmond C."/>
            <person name="Thwaite J.E."/>
            <person name="White O."/>
            <person name="Salzberg S.L."/>
            <person name="Thomason B."/>
            <person name="Friedlander A.M."/>
            <person name="Koehler T.M."/>
            <person name="Hanna P.C."/>
            <person name="Kolstoe A.-B."/>
            <person name="Fraser C.M."/>
        </authorList>
    </citation>
    <scope>NUCLEOTIDE SEQUENCE [LARGE SCALE GENOMIC DNA]</scope>
    <source>
        <strain>Ames / isolate Porton</strain>
    </source>
</reference>
<reference key="2">
    <citation type="journal article" date="2009" name="J. Bacteriol.">
        <title>The complete genome sequence of Bacillus anthracis Ames 'Ancestor'.</title>
        <authorList>
            <person name="Ravel J."/>
            <person name="Jiang L."/>
            <person name="Stanley S.T."/>
            <person name="Wilson M.R."/>
            <person name="Decker R.S."/>
            <person name="Read T.D."/>
            <person name="Worsham P."/>
            <person name="Keim P.S."/>
            <person name="Salzberg S.L."/>
            <person name="Fraser-Liggett C.M."/>
            <person name="Rasko D.A."/>
        </authorList>
    </citation>
    <scope>NUCLEOTIDE SEQUENCE [LARGE SCALE GENOMIC DNA]</scope>
    <source>
        <strain>Ames ancestor</strain>
    </source>
</reference>
<reference key="3">
    <citation type="submission" date="2004-01" db="EMBL/GenBank/DDBJ databases">
        <title>Complete genome sequence of Bacillus anthracis Sterne.</title>
        <authorList>
            <person name="Brettin T.S."/>
            <person name="Bruce D."/>
            <person name="Challacombe J.F."/>
            <person name="Gilna P."/>
            <person name="Han C."/>
            <person name="Hill K."/>
            <person name="Hitchcock P."/>
            <person name="Jackson P."/>
            <person name="Keim P."/>
            <person name="Longmire J."/>
            <person name="Lucas S."/>
            <person name="Okinaka R."/>
            <person name="Richardson P."/>
            <person name="Rubin E."/>
            <person name="Tice H."/>
        </authorList>
    </citation>
    <scope>NUCLEOTIDE SEQUENCE [LARGE SCALE GENOMIC DNA]</scope>
    <source>
        <strain>Sterne</strain>
    </source>
</reference>
<reference key="4">
    <citation type="journal article" date="2007" name="J. Bacteriol.">
        <title>Biosynthetic analysis of the petrobactin siderophore pathway from Bacillus anthracis.</title>
        <authorList>
            <person name="Lee J.Y."/>
            <person name="Janes B.K."/>
            <person name="Passalacqua K.D."/>
            <person name="Pfleger B.F."/>
            <person name="Bergman N.H."/>
            <person name="Liu H."/>
            <person name="Haakansson K."/>
            <person name="Somu R.V."/>
            <person name="Aldrich C.C."/>
            <person name="Cendrowski S."/>
            <person name="Hanna P.C."/>
            <person name="Sherman D.H."/>
        </authorList>
    </citation>
    <scope>FUNCTION</scope>
    <scope>PATHWAY</scope>
    <scope>DISRUPTION PHENOTYPE</scope>
    <source>
        <strain>Sterne</strain>
    </source>
</reference>
<reference key="5">
    <citation type="journal article" date="2016" name="Mol. Microbiol.">
        <title>Flying under the radar: The non-canonical biochemistry and molecular biology of petrobactin from Bacillus anthracis.</title>
        <authorList>
            <person name="Hagan A.K."/>
            <person name="Carlson P.E. Jr."/>
            <person name="Hanna P.C."/>
        </authorList>
    </citation>
    <scope>REVIEW</scope>
</reference>
<reference key="6">
    <citation type="journal article" date="2008" name="Proc. Natl. Acad. Sci. U.S.A.">
        <title>Structural and functional analysis of AsbF: origin of the stealth 3,4-dihydroxybenzoic acid subunit for petrobactin biosynthesis.</title>
        <authorList>
            <person name="Pfleger B.F."/>
            <person name="Kim Y."/>
            <person name="Nusca T.D."/>
            <person name="Maltseva N."/>
            <person name="Lee J.Y."/>
            <person name="Rath C.M."/>
            <person name="Scaglione J.B."/>
            <person name="Janes B.K."/>
            <person name="Anderson E.C."/>
            <person name="Bergman N.H."/>
            <person name="Hanna P.C."/>
            <person name="Joachimiak A."/>
            <person name="Sherman D.H."/>
        </authorList>
    </citation>
    <scope>X-RAY CRYSTALLOGRAPHY (2.12 ANGSTROMS) IN COMPLEX WITH SUBSTRATE AND MANGANESE</scope>
    <scope>FUNCTION</scope>
    <scope>CATALYTIC ACTIVITY</scope>
    <scope>COFACTOR</scope>
    <scope>SUBUNIT</scope>
    <scope>BIOPHYSICOCHEMICAL PROPERTIES</scope>
    <scope>MUTAGENESIS OF TYR-70; ARG-102; HIS-144; HIS-175; LYS-200 AND TYR-217</scope>
    <scope>REACTION MECHANISM</scope>
    <scope>ACTIVE SITE</scope>
    <source>
        <strain>Sterne</strain>
    </source>
</reference>
<dbReference type="EC" id="4.2.1.118" evidence="2"/>
<dbReference type="EMBL" id="AE016879">
    <property type="protein sequence ID" value="AAP25878.1"/>
    <property type="molecule type" value="Genomic_DNA"/>
</dbReference>
<dbReference type="EMBL" id="AE017334">
    <property type="protein sequence ID" value="AAT31105.1"/>
    <property type="molecule type" value="Genomic_DNA"/>
</dbReference>
<dbReference type="EMBL" id="AE017225">
    <property type="protein sequence ID" value="AAT54158.1"/>
    <property type="molecule type" value="Genomic_DNA"/>
</dbReference>
<dbReference type="RefSeq" id="NP_844392.1">
    <property type="nucleotide sequence ID" value="NC_003997.3"/>
</dbReference>
<dbReference type="RefSeq" id="WP_000877695.1">
    <property type="nucleotide sequence ID" value="NZ_WXXJ01000029.1"/>
</dbReference>
<dbReference type="RefSeq" id="YP_028107.1">
    <property type="nucleotide sequence ID" value="NC_005945.1"/>
</dbReference>
<dbReference type="PDB" id="3DX5">
    <property type="method" value="X-ray"/>
    <property type="resolution" value="2.12 A"/>
    <property type="chains" value="A=1-280"/>
</dbReference>
<dbReference type="PDBsum" id="3DX5"/>
<dbReference type="SMR" id="Q81RQ4"/>
<dbReference type="STRING" id="261594.GBAA_1986"/>
<dbReference type="DNASU" id="1085888"/>
<dbReference type="GeneID" id="45021908"/>
<dbReference type="KEGG" id="ban:BA_1986"/>
<dbReference type="KEGG" id="banh:HYU01_09950"/>
<dbReference type="KEGG" id="bar:GBAA_1986"/>
<dbReference type="KEGG" id="bat:BAS1843"/>
<dbReference type="PATRIC" id="fig|198094.11.peg.1957"/>
<dbReference type="eggNOG" id="COG1082">
    <property type="taxonomic scope" value="Bacteria"/>
</dbReference>
<dbReference type="HOGENOM" id="CLU_086649_0_0_9"/>
<dbReference type="OMA" id="SLEWFGE"/>
<dbReference type="OrthoDB" id="9815124at2"/>
<dbReference type="BioCyc" id="MetaCyc:MONOMER-14940"/>
<dbReference type="BRENDA" id="4.2.1.118">
    <property type="organism ID" value="634"/>
</dbReference>
<dbReference type="SABIO-RK" id="Q81RQ4"/>
<dbReference type="UniPathway" id="UPA00088">
    <property type="reaction ID" value="UER00179"/>
</dbReference>
<dbReference type="UniPathway" id="UPA01005"/>
<dbReference type="EvolutionaryTrace" id="Q81RQ4"/>
<dbReference type="Proteomes" id="UP000000427">
    <property type="component" value="Chromosome"/>
</dbReference>
<dbReference type="Proteomes" id="UP000000594">
    <property type="component" value="Chromosome"/>
</dbReference>
<dbReference type="GO" id="GO:0046565">
    <property type="term" value="F:3-dehydroshikimate dehydratase activity"/>
    <property type="evidence" value="ECO:0007669"/>
    <property type="project" value="UniProtKB-EC"/>
</dbReference>
<dbReference type="GO" id="GO:0046872">
    <property type="term" value="F:metal ion binding"/>
    <property type="evidence" value="ECO:0007669"/>
    <property type="project" value="UniProtKB-KW"/>
</dbReference>
<dbReference type="GO" id="GO:0046279">
    <property type="term" value="P:3,4-dihydroxybenzoate biosynthetic process"/>
    <property type="evidence" value="ECO:0007669"/>
    <property type="project" value="UniProtKB-UniPathway"/>
</dbReference>
<dbReference type="Gene3D" id="3.20.20.150">
    <property type="entry name" value="Divalent-metal-dependent TIM barrel enzymes"/>
    <property type="match status" value="1"/>
</dbReference>
<dbReference type="InterPro" id="IPR050312">
    <property type="entry name" value="IolE/XylAMocC-like"/>
</dbReference>
<dbReference type="InterPro" id="IPR036237">
    <property type="entry name" value="Xyl_isomerase-like_sf"/>
</dbReference>
<dbReference type="InterPro" id="IPR013022">
    <property type="entry name" value="Xyl_isomerase-like_TIM-brl"/>
</dbReference>
<dbReference type="PANTHER" id="PTHR12110">
    <property type="entry name" value="HYDROXYPYRUVATE ISOMERASE"/>
    <property type="match status" value="1"/>
</dbReference>
<dbReference type="PANTHER" id="PTHR12110:SF21">
    <property type="entry name" value="XYLOSE ISOMERASE-LIKE TIM BARREL DOMAIN-CONTAINING PROTEIN"/>
    <property type="match status" value="1"/>
</dbReference>
<dbReference type="Pfam" id="PF01261">
    <property type="entry name" value="AP_endonuc_2"/>
    <property type="match status" value="1"/>
</dbReference>
<dbReference type="SUPFAM" id="SSF51658">
    <property type="entry name" value="Xylose isomerase-like"/>
    <property type="match status" value="1"/>
</dbReference>
<keyword id="KW-0002">3D-structure</keyword>
<keyword id="KW-0456">Lyase</keyword>
<keyword id="KW-0464">Manganese</keyword>
<keyword id="KW-0479">Metal-binding</keyword>
<keyword id="KW-1185">Reference proteome</keyword>
<proteinExistence type="evidence at protein level"/>
<evidence type="ECO:0000269" key="1">
    <source>
    </source>
</evidence>
<evidence type="ECO:0000269" key="2">
    <source>
    </source>
</evidence>
<evidence type="ECO:0000303" key="3">
    <source>
    </source>
</evidence>
<evidence type="ECO:0000303" key="4">
    <source>
    </source>
</evidence>
<evidence type="ECO:0000305" key="5"/>
<evidence type="ECO:0000305" key="6">
    <source>
    </source>
</evidence>
<evidence type="ECO:0007829" key="7">
    <source>
        <dbReference type="PDB" id="3DX5"/>
    </source>
</evidence>
<accession>Q81RQ4</accession>
<accession>Q6HZY1</accession>
<accession>Q6KTW0</accession>
<sequence>MKYSLCTISFRHQLISFTDIVQFAYENGFEGIELWGTHAQNLYMQEYETTERELNCLKDKTLEITMISDYLDISLSADFEKTIEKCEQLAILANWFKTNKIRTFAGQKGSADFSQQERQEYVNRIRMICELFAQHNMYVLLETHPNTLTDTLPSTLELLGEVDHPNLKINLDFLHIWESGADPVDSFQQLRPWIQHYHFKNISSADYLHVFEPNNVYAAAGNRTGMVPLFEGIVNYDEIIQEVRDTDHFASLEWFGHNAKDILKAEMKVLTNRNLEVVTS</sequence>
<comment type="function">
    <text evidence="1 2">Involved in the biosynthesis of petrobactin, a catecholate siderophore that functions in both iron acquisition and virulence (PubMed:17189355, PubMed:18955706). Catalyzes the conversion of 3-dehydroshikimate to 3,4-dihydroxybenzoate (3,4-DHBA) (PubMed:18955706).</text>
</comment>
<comment type="catalytic activity">
    <reaction evidence="2">
        <text>3-dehydroshikimate = 3,4-dihydroxybenzoate + H2O</text>
        <dbReference type="Rhea" id="RHEA:24848"/>
        <dbReference type="ChEBI" id="CHEBI:15377"/>
        <dbReference type="ChEBI" id="CHEBI:16630"/>
        <dbReference type="ChEBI" id="CHEBI:36241"/>
        <dbReference type="EC" id="4.2.1.118"/>
    </reaction>
</comment>
<comment type="cofactor">
    <cofactor evidence="2">
        <name>Mn(2+)</name>
        <dbReference type="ChEBI" id="CHEBI:29035"/>
    </cofactor>
    <text evidence="2">Binds 1 Mn(2+) ion per subunit.</text>
</comment>
<comment type="biophysicochemical properties">
    <kinetics>
        <KM evidence="2">290 uM for 3-dehydro-shikimate</KM>
    </kinetics>
    <phDependence>
        <text evidence="2">Optimum pH is &gt;9.5.</text>
    </phDependence>
</comment>
<comment type="pathway">
    <text>Aromatic compound metabolism; 3,4-dihydroxybenzoate biosynthesis; 3,4-dihydroxybenzoate from 3-dehydroquinate: step 2/2.</text>
</comment>
<comment type="pathway">
    <text evidence="1">Siderophore biosynthesis; petrobactin biosynthesis.</text>
</comment>
<comment type="subunit">
    <text evidence="2">Homodimer.</text>
</comment>
<comment type="disruption phenotype">
    <text evidence="1">The deletion mutant cannot produce petrobactin on iron-depleted medium. In vitro analysis show that mutants grow to a very limited extent as vegetative cells in iron-depleted medium but are not able to outgrow from spores under the same culture conditions.</text>
</comment>
<feature type="chain" id="PRO_0000400088" description="3-dehydroshikimate dehydratase">
    <location>
        <begin position="1"/>
        <end position="280"/>
    </location>
</feature>
<feature type="active site" description="Proton acceptor" evidence="6">
    <location>
        <position position="144"/>
    </location>
</feature>
<feature type="binding site" evidence="2">
    <location>
        <position position="70"/>
    </location>
    <ligand>
        <name>substrate</name>
    </ligand>
</feature>
<feature type="binding site" evidence="2">
    <location>
        <position position="102"/>
    </location>
    <ligand>
        <name>substrate</name>
    </ligand>
</feature>
<feature type="binding site" evidence="2">
    <location>
        <position position="142"/>
    </location>
    <ligand>
        <name>Mn(2+)</name>
        <dbReference type="ChEBI" id="CHEBI:29035"/>
    </ligand>
</feature>
<feature type="binding site" evidence="2">
    <location>
        <position position="142"/>
    </location>
    <ligand>
        <name>substrate</name>
    </ligand>
</feature>
<feature type="binding site" evidence="2">
    <location>
        <position position="172"/>
    </location>
    <ligand>
        <name>Mn(2+)</name>
        <dbReference type="ChEBI" id="CHEBI:29035"/>
    </ligand>
</feature>
<feature type="binding site" evidence="2">
    <location>
        <position position="172"/>
    </location>
    <ligand>
        <name>substrate</name>
    </ligand>
</feature>
<feature type="binding site" evidence="2">
    <location>
        <position position="175"/>
    </location>
    <ligand>
        <name>substrate</name>
    </ligand>
</feature>
<feature type="binding site" evidence="2">
    <location>
        <position position="198"/>
    </location>
    <ligand>
        <name>Mn(2+)</name>
        <dbReference type="ChEBI" id="CHEBI:29035"/>
    </ligand>
</feature>
<feature type="binding site" evidence="2">
    <location>
        <position position="217"/>
    </location>
    <ligand>
        <name>substrate</name>
    </ligand>
</feature>
<feature type="binding site" evidence="2">
    <location>
        <position position="253"/>
    </location>
    <ligand>
        <name>Mn(2+)</name>
        <dbReference type="ChEBI" id="CHEBI:29035"/>
    </ligand>
</feature>
<feature type="binding site" evidence="2">
    <location>
        <position position="253"/>
    </location>
    <ligand>
        <name>substrate</name>
    </ligand>
</feature>
<feature type="mutagenesis site" description="Binds substrate with 10-fold lower affinity; when associated with A-217." evidence="2">
    <original>Y</original>
    <variation>A</variation>
    <location>
        <position position="70"/>
    </location>
</feature>
<feature type="mutagenesis site" description="No activity." evidence="2">
    <original>R</original>
    <variation>A</variation>
    <location>
        <position position="102"/>
    </location>
</feature>
<feature type="mutagenesis site" description="No activity." evidence="2">
    <original>H</original>
    <variation>A</variation>
    <location>
        <position position="144"/>
    </location>
</feature>
<feature type="mutagenesis site" description="Only trace activity remaining." evidence="2">
    <original>H</original>
    <variation>A</variation>
    <location>
        <position position="175"/>
    </location>
</feature>
<feature type="mutagenesis site" description="No activity." evidence="2">
    <original>K</original>
    <variation>A</variation>
    <variation>E</variation>
    <location>
        <position position="200"/>
    </location>
</feature>
<feature type="mutagenesis site" description="Less than 5% activity remaining." evidence="2">
    <original>K</original>
    <variation>R</variation>
    <location>
        <position position="200"/>
    </location>
</feature>
<feature type="mutagenesis site" description="Binds substrate with 10-fold lower affinity; when associated with A-70." evidence="2">
    <original>Y</original>
    <variation>A</variation>
    <location>
        <position position="217"/>
    </location>
</feature>
<feature type="strand" evidence="7">
    <location>
        <begin position="2"/>
        <end position="6"/>
    </location>
</feature>
<feature type="helix" evidence="7">
    <location>
        <begin position="7"/>
        <end position="10"/>
    </location>
</feature>
<feature type="helix" evidence="7">
    <location>
        <begin position="17"/>
        <end position="26"/>
    </location>
</feature>
<feature type="strand" evidence="7">
    <location>
        <begin position="31"/>
        <end position="35"/>
    </location>
</feature>
<feature type="helix" evidence="7">
    <location>
        <begin position="36"/>
        <end position="45"/>
    </location>
</feature>
<feature type="helix" evidence="7">
    <location>
        <begin position="47"/>
        <end position="56"/>
    </location>
</feature>
<feature type="helix" evidence="7">
    <location>
        <begin position="58"/>
        <end position="60"/>
    </location>
</feature>
<feature type="strand" evidence="7">
    <location>
        <begin position="64"/>
        <end position="68"/>
    </location>
</feature>
<feature type="helix" evidence="7">
    <location>
        <begin position="79"/>
        <end position="96"/>
    </location>
</feature>
<feature type="strand" evidence="7">
    <location>
        <begin position="100"/>
        <end position="103"/>
    </location>
</feature>
<feature type="helix" evidence="7">
    <location>
        <begin position="110"/>
        <end position="112"/>
    </location>
</feature>
<feature type="helix" evidence="7">
    <location>
        <begin position="115"/>
        <end position="134"/>
    </location>
</feature>
<feature type="strand" evidence="7">
    <location>
        <begin position="138"/>
        <end position="142"/>
    </location>
</feature>
<feature type="helix" evidence="7">
    <location>
        <begin position="152"/>
        <end position="162"/>
    </location>
</feature>
<feature type="strand" evidence="7">
    <location>
        <begin position="167"/>
        <end position="172"/>
    </location>
</feature>
<feature type="helix" evidence="7">
    <location>
        <begin position="173"/>
        <end position="178"/>
    </location>
</feature>
<feature type="helix" evidence="7">
    <location>
        <begin position="183"/>
        <end position="190"/>
    </location>
</feature>
<feature type="helix" evidence="7">
    <location>
        <begin position="191"/>
        <end position="193"/>
    </location>
</feature>
<feature type="strand" evidence="7">
    <location>
        <begin position="194"/>
        <end position="199"/>
    </location>
</feature>
<feature type="strand" evidence="7">
    <location>
        <begin position="201"/>
        <end position="203"/>
    </location>
</feature>
<feature type="helix" evidence="7">
    <location>
        <begin position="205"/>
        <end position="211"/>
    </location>
</feature>
<feature type="helix" evidence="7">
    <location>
        <begin position="213"/>
        <end position="217"/>
    </location>
</feature>
<feature type="helix" evidence="7">
    <location>
        <begin position="229"/>
        <end position="231"/>
    </location>
</feature>
<feature type="strand" evidence="7">
    <location>
        <begin position="232"/>
        <end position="234"/>
    </location>
</feature>
<feature type="helix" evidence="7">
    <location>
        <begin position="236"/>
        <end position="243"/>
    </location>
</feature>
<feature type="strand" evidence="7">
    <location>
        <begin position="249"/>
        <end position="252"/>
    </location>
</feature>
<feature type="helix" evidence="7">
    <location>
        <begin position="259"/>
        <end position="272"/>
    </location>
</feature>
<protein>
    <recommendedName>
        <fullName evidence="4">3-dehydroshikimate dehydratase</fullName>
        <shortName evidence="4">3-DHS dehydratase</shortName>
        <shortName evidence="5">DHSase</shortName>
        <ecNumber evidence="2">4.2.1.118</ecNumber>
    </recommendedName>
    <alternativeName>
        <fullName evidence="5">Petrobactin biosynthesis protein AsbF</fullName>
    </alternativeName>
</protein>
<name>ASBF_BACAN</name>
<gene>
    <name evidence="3" type="primary">asbF</name>
    <name type="ordered locus">BA_1986</name>
    <name type="ordered locus">GBAA_1986</name>
    <name type="ordered locus">BAS1843</name>
</gene>
<organism>
    <name type="scientific">Bacillus anthracis</name>
    <dbReference type="NCBI Taxonomy" id="1392"/>
    <lineage>
        <taxon>Bacteria</taxon>
        <taxon>Bacillati</taxon>
        <taxon>Bacillota</taxon>
        <taxon>Bacilli</taxon>
        <taxon>Bacillales</taxon>
        <taxon>Bacillaceae</taxon>
        <taxon>Bacillus</taxon>
        <taxon>Bacillus cereus group</taxon>
    </lineage>
</organism>